<reference key="1">
    <citation type="journal article" date="1998" name="Science">
        <title>Genome sequence of the nematode C. elegans: a platform for investigating biology.</title>
        <authorList>
            <consortium name="The C. elegans sequencing consortium"/>
        </authorList>
    </citation>
    <scope>NUCLEOTIDE SEQUENCE [LARGE SCALE GENOMIC DNA]</scope>
    <source>
        <strain>Bristol N2</strain>
    </source>
</reference>
<dbReference type="EMBL" id="FO081120">
    <property type="protein sequence ID" value="CCD69276.1"/>
    <property type="molecule type" value="Genomic_DNA"/>
</dbReference>
<dbReference type="PIR" id="T16684">
    <property type="entry name" value="T16684"/>
</dbReference>
<dbReference type="RefSeq" id="NP_494888.1">
    <property type="nucleotide sequence ID" value="NM_062487.9"/>
</dbReference>
<dbReference type="SMR" id="P53019"/>
<dbReference type="FunCoup" id="P53019">
    <property type="interactions" value="12"/>
</dbReference>
<dbReference type="STRING" id="6239.R05F9.8.1"/>
<dbReference type="PaxDb" id="6239-R05F9.8"/>
<dbReference type="PeptideAtlas" id="P53019"/>
<dbReference type="EnsemblMetazoa" id="R05F9.8.1">
    <property type="protein sequence ID" value="R05F9.8.1"/>
    <property type="gene ID" value="WBGene00003431"/>
</dbReference>
<dbReference type="GeneID" id="173844"/>
<dbReference type="KEGG" id="cel:CELE_R05F9.8"/>
<dbReference type="UCSC" id="R05F9.8">
    <property type="organism name" value="c. elegans"/>
</dbReference>
<dbReference type="AGR" id="WB:WBGene00003431"/>
<dbReference type="CTD" id="173844"/>
<dbReference type="WormBase" id="R05F9.8">
    <property type="protein sequence ID" value="CE04811"/>
    <property type="gene ID" value="WBGene00003431"/>
    <property type="gene designation" value="msp-33"/>
</dbReference>
<dbReference type="eggNOG" id="ENOG502RXF6">
    <property type="taxonomic scope" value="Eukaryota"/>
</dbReference>
<dbReference type="GeneTree" id="ENSGT00970000195833"/>
<dbReference type="HOGENOM" id="CLU_120664_0_1_1"/>
<dbReference type="InParanoid" id="P53019"/>
<dbReference type="OrthoDB" id="5918453at2759"/>
<dbReference type="PhylomeDB" id="P53019"/>
<dbReference type="PRO" id="PR:P53019"/>
<dbReference type="Proteomes" id="UP000001940">
    <property type="component" value="Chromosome II"/>
</dbReference>
<dbReference type="Bgee" id="WBGene00003431">
    <property type="expression patterns" value="Expressed in adult organism and 1 other cell type or tissue"/>
</dbReference>
<dbReference type="GO" id="GO:0005737">
    <property type="term" value="C:cytoplasm"/>
    <property type="evidence" value="ECO:0007669"/>
    <property type="project" value="UniProtKB-KW"/>
</dbReference>
<dbReference type="GO" id="GO:0005856">
    <property type="term" value="C:cytoskeleton"/>
    <property type="evidence" value="ECO:0007669"/>
    <property type="project" value="UniProtKB-SubCell"/>
</dbReference>
<dbReference type="GO" id="GO:0031143">
    <property type="term" value="C:pseudopodium"/>
    <property type="evidence" value="ECO:0007669"/>
    <property type="project" value="UniProtKB-SubCell"/>
</dbReference>
<dbReference type="FunFam" id="2.60.40.10:FF:001120">
    <property type="entry name" value="Major sperm protein 19/31/40/45/50/51/53/59/61/65/81/113/142"/>
    <property type="match status" value="1"/>
</dbReference>
<dbReference type="Gene3D" id="2.60.40.10">
    <property type="entry name" value="Immunoglobulins"/>
    <property type="match status" value="1"/>
</dbReference>
<dbReference type="InterPro" id="IPR013783">
    <property type="entry name" value="Ig-like_fold"/>
</dbReference>
<dbReference type="InterPro" id="IPR000535">
    <property type="entry name" value="MSP_dom"/>
</dbReference>
<dbReference type="InterPro" id="IPR051155">
    <property type="entry name" value="Nematode_MSP"/>
</dbReference>
<dbReference type="InterPro" id="IPR008962">
    <property type="entry name" value="PapD-like_sf"/>
</dbReference>
<dbReference type="PANTHER" id="PTHR22920">
    <property type="entry name" value="MAJOR SPERM PROTEIN"/>
    <property type="match status" value="1"/>
</dbReference>
<dbReference type="PANTHER" id="PTHR22920:SF7">
    <property type="entry name" value="MSP DOMAIN-CONTAINING PROTEIN-RELATED"/>
    <property type="match status" value="1"/>
</dbReference>
<dbReference type="Pfam" id="PF00635">
    <property type="entry name" value="Motile_Sperm"/>
    <property type="match status" value="1"/>
</dbReference>
<dbReference type="SUPFAM" id="SSF49354">
    <property type="entry name" value="PapD-like"/>
    <property type="match status" value="1"/>
</dbReference>
<dbReference type="PROSITE" id="PS50202">
    <property type="entry name" value="MSP"/>
    <property type="match status" value="1"/>
</dbReference>
<keyword id="KW-0007">Acetylation</keyword>
<keyword id="KW-0966">Cell projection</keyword>
<keyword id="KW-0963">Cytoplasm</keyword>
<keyword id="KW-0206">Cytoskeleton</keyword>
<keyword id="KW-1185">Reference proteome</keyword>
<accession>P53019</accession>
<feature type="initiator methionine" description="Removed" evidence="1">
    <location>
        <position position="1"/>
    </location>
</feature>
<feature type="chain" id="PRO_0000213439" description="Major sperm protein 33">
    <location>
        <begin position="2"/>
        <end position="127"/>
    </location>
</feature>
<feature type="domain" description="MSP" evidence="2">
    <location>
        <begin position="9"/>
        <end position="126"/>
    </location>
</feature>
<feature type="modified residue" description="N-acetylalanine" evidence="1">
    <location>
        <position position="2"/>
    </location>
</feature>
<sequence>MAQSVPPGDIQTQPGTKIVFNAPYDDKHTYHIKVINSSARRIGYGIKTTNMKRLGVDPPCGVLDPKEAVFLAVSCDAFAFGQEDTNNDRITVEWTNTPDGAAKQFRREWFQGDGMVRRKNLPIEYNP</sequence>
<protein>
    <recommendedName>
        <fullName>Major sperm protein 33</fullName>
        <shortName>MSP</shortName>
    </recommendedName>
</protein>
<gene>
    <name type="primary">msp-33</name>
    <name type="ORF">R05F9.8</name>
</gene>
<evidence type="ECO:0000250" key="1"/>
<evidence type="ECO:0000255" key="2">
    <source>
        <dbReference type="PROSITE-ProRule" id="PRU00132"/>
    </source>
</evidence>
<proteinExistence type="evidence at transcript level"/>
<comment type="function">
    <text>Central component in molecular interactions underlying sperm crawling. Forms an extensive filament system that extends from sperm villipoda, along the leading edge of the pseudopod.</text>
</comment>
<comment type="subcellular location">
    <subcellularLocation>
        <location>Cell projection</location>
        <location>Pseudopodium</location>
    </subcellularLocation>
    <subcellularLocation>
        <location>Cytoplasm</location>
        <location>Cytoskeleton</location>
    </subcellularLocation>
</comment>
<comment type="tissue specificity">
    <text>Sperm.</text>
</comment>
<comment type="miscellaneous">
    <text>Around 30 MSP isoforms may exist in C.elegans.</text>
</comment>
<organism>
    <name type="scientific">Caenorhabditis elegans</name>
    <dbReference type="NCBI Taxonomy" id="6239"/>
    <lineage>
        <taxon>Eukaryota</taxon>
        <taxon>Metazoa</taxon>
        <taxon>Ecdysozoa</taxon>
        <taxon>Nematoda</taxon>
        <taxon>Chromadorea</taxon>
        <taxon>Rhabditida</taxon>
        <taxon>Rhabditina</taxon>
        <taxon>Rhabditomorpha</taxon>
        <taxon>Rhabditoidea</taxon>
        <taxon>Rhabditidae</taxon>
        <taxon>Peloderinae</taxon>
        <taxon>Caenorhabditis</taxon>
    </lineage>
</organism>
<name>MSP33_CAEEL</name>